<gene>
    <name evidence="1" type="primary">wecG</name>
    <name evidence="1" type="synonym">rffM</name>
    <name type="ordered locus">SeHA_C4258</name>
</gene>
<dbReference type="EC" id="2.4.1.180" evidence="1"/>
<dbReference type="EMBL" id="CP001120">
    <property type="protein sequence ID" value="ACF67131.1"/>
    <property type="molecule type" value="Genomic_DNA"/>
</dbReference>
<dbReference type="RefSeq" id="WP_000183617.1">
    <property type="nucleotide sequence ID" value="NC_011083.1"/>
</dbReference>
<dbReference type="SMR" id="B4TB27"/>
<dbReference type="CAZy" id="GT26">
    <property type="family name" value="Glycosyltransferase Family 26"/>
</dbReference>
<dbReference type="KEGG" id="seh:SeHA_C4258"/>
<dbReference type="HOGENOM" id="CLU_063203_3_2_6"/>
<dbReference type="UniPathway" id="UPA00566"/>
<dbReference type="Proteomes" id="UP000001866">
    <property type="component" value="Chromosome"/>
</dbReference>
<dbReference type="GO" id="GO:0047241">
    <property type="term" value="F:lipopolysaccharide N-acetylmannosaminouronosyltransferase activity"/>
    <property type="evidence" value="ECO:0007669"/>
    <property type="project" value="UniProtKB-UniRule"/>
</dbReference>
<dbReference type="GO" id="GO:0009246">
    <property type="term" value="P:enterobacterial common antigen biosynthetic process"/>
    <property type="evidence" value="ECO:0007669"/>
    <property type="project" value="UniProtKB-UniRule"/>
</dbReference>
<dbReference type="CDD" id="cd06533">
    <property type="entry name" value="Glyco_transf_WecG_TagA"/>
    <property type="match status" value="1"/>
</dbReference>
<dbReference type="HAMAP" id="MF_01001">
    <property type="entry name" value="WecG_RffM"/>
    <property type="match status" value="1"/>
</dbReference>
<dbReference type="InterPro" id="IPR023085">
    <property type="entry name" value="UDP-ManNAcA_Trfase_WecG"/>
</dbReference>
<dbReference type="InterPro" id="IPR004629">
    <property type="entry name" value="WecG_TagA_CpsF"/>
</dbReference>
<dbReference type="NCBIfam" id="NF002980">
    <property type="entry name" value="PRK03692.1"/>
    <property type="match status" value="1"/>
</dbReference>
<dbReference type="NCBIfam" id="TIGR00696">
    <property type="entry name" value="wecG_tagA_cpsF"/>
    <property type="match status" value="1"/>
</dbReference>
<dbReference type="PANTHER" id="PTHR34136">
    <property type="match status" value="1"/>
</dbReference>
<dbReference type="PANTHER" id="PTHR34136:SF1">
    <property type="entry name" value="UDP-N-ACETYL-D-MANNOSAMINURONIC ACID TRANSFERASE"/>
    <property type="match status" value="1"/>
</dbReference>
<dbReference type="Pfam" id="PF03808">
    <property type="entry name" value="Glyco_tran_WecG"/>
    <property type="match status" value="1"/>
</dbReference>
<evidence type="ECO:0000255" key="1">
    <source>
        <dbReference type="HAMAP-Rule" id="MF_01001"/>
    </source>
</evidence>
<keyword id="KW-0328">Glycosyltransferase</keyword>
<keyword id="KW-0808">Transferase</keyword>
<feature type="chain" id="PRO_1000134586" description="UDP-N-acetyl-D-mannosaminuronic acid transferase">
    <location>
        <begin position="1"/>
        <end position="246"/>
    </location>
</feature>
<name>WECG_SALHS</name>
<sequence>MTNNAAAPLYSLRGLPLIGWRDMSHALNYLFADGQLKQGTLVAINAEKLLTAEDNPEVRALIAAAEFKYADGISVVRSIRKKFPQAQVSRVAGADLWEALMARAGKEGTPVFLVGGKPEVLAQTEAKLRTQWNVNIVGSQDGYFTPEQRQALFARIHASGAKIVTVAMGSPKQELLMRDCREVHPHALYMGVGGTYDVFTGHVKRAPKIWQNLGLEWLYRLLSQPKRITRQMRLLRYLRWHYTGDL</sequence>
<accession>B4TB27</accession>
<proteinExistence type="inferred from homology"/>
<organism>
    <name type="scientific">Salmonella heidelberg (strain SL476)</name>
    <dbReference type="NCBI Taxonomy" id="454169"/>
    <lineage>
        <taxon>Bacteria</taxon>
        <taxon>Pseudomonadati</taxon>
        <taxon>Pseudomonadota</taxon>
        <taxon>Gammaproteobacteria</taxon>
        <taxon>Enterobacterales</taxon>
        <taxon>Enterobacteriaceae</taxon>
        <taxon>Salmonella</taxon>
    </lineage>
</organism>
<comment type="function">
    <text evidence="1">Catalyzes the synthesis of Und-PP-GlcNAc-ManNAcA (Lipid II), the second lipid-linked intermediate involved in enterobacterial common antigen (ECA) synthesis.</text>
</comment>
<comment type="catalytic activity">
    <reaction evidence="1">
        <text>UDP-N-acetyl-alpha-D-mannosaminouronate + N-acetyl-alpha-D-glucosaminyl-di-trans,octa-cis-undecaprenyl diphosphate = beta-D-ManNAcA-(1-&gt;4)-alpha-D-GlcNAc-di-trans,octa-cis-undecaprenyl diphosphate + UDP + H(+)</text>
        <dbReference type="Rhea" id="RHEA:28366"/>
        <dbReference type="ChEBI" id="CHEBI:15378"/>
        <dbReference type="ChEBI" id="CHEBI:58223"/>
        <dbReference type="ChEBI" id="CHEBI:61495"/>
        <dbReference type="ChEBI" id="CHEBI:62959"/>
        <dbReference type="ChEBI" id="CHEBI:70731"/>
        <dbReference type="EC" id="2.4.1.180"/>
    </reaction>
</comment>
<comment type="pathway">
    <text evidence="1">Bacterial outer membrane biogenesis; enterobacterial common antigen biosynthesis.</text>
</comment>
<comment type="similarity">
    <text evidence="1">Belongs to the glycosyltransferase 26 family.</text>
</comment>
<reference key="1">
    <citation type="journal article" date="2011" name="J. Bacteriol.">
        <title>Comparative genomics of 28 Salmonella enterica isolates: evidence for CRISPR-mediated adaptive sublineage evolution.</title>
        <authorList>
            <person name="Fricke W.F."/>
            <person name="Mammel M.K."/>
            <person name="McDermott P.F."/>
            <person name="Tartera C."/>
            <person name="White D.G."/>
            <person name="Leclerc J.E."/>
            <person name="Ravel J."/>
            <person name="Cebula T.A."/>
        </authorList>
    </citation>
    <scope>NUCLEOTIDE SEQUENCE [LARGE SCALE GENOMIC DNA]</scope>
    <source>
        <strain>SL476</strain>
    </source>
</reference>
<protein>
    <recommendedName>
        <fullName evidence="1">UDP-N-acetyl-D-mannosaminuronic acid transferase</fullName>
        <shortName evidence="1">UDP-ManNAcA transferase</shortName>
        <ecNumber evidence="1">2.4.1.180</ecNumber>
    </recommendedName>
</protein>